<reference key="1">
    <citation type="submission" date="2004-01" db="EMBL/GenBank/DDBJ databases">
        <title>Gene expression in normal chinchilla middle ear mucosa.</title>
        <authorList>
            <person name="Erdos G."/>
            <person name="Hu F.Z."/>
            <person name="Donfack J."/>
            <person name="Ahmed A.I."/>
            <person name="Preston R.A."/>
            <person name="Hayes J.D."/>
            <person name="Post J.C."/>
            <person name="Ehrlich G.D."/>
        </authorList>
    </citation>
    <scope>NUCLEOTIDE SEQUENCE [LARGE SCALE MRNA]</scope>
    <source>
        <tissue>Middle ear mucosa</tissue>
    </source>
</reference>
<keyword id="KW-0007">Acetylation</keyword>
<keyword id="KW-0143">Chaperone</keyword>
<keyword id="KW-0963">Cytoplasm</keyword>
<keyword id="KW-0238">DNA-binding</keyword>
<keyword id="KW-1017">Isopeptide bond</keyword>
<keyword id="KW-0539">Nucleus</keyword>
<keyword id="KW-0597">Phosphoprotein</keyword>
<keyword id="KW-0653">Protein transport</keyword>
<keyword id="KW-1185">Reference proteome</keyword>
<keyword id="KW-0804">Transcription</keyword>
<keyword id="KW-0813">Transport</keyword>
<keyword id="KW-0832">Ubl conjugation</keyword>
<protein>
    <recommendedName>
        <fullName>Nascent polypeptide-associated complex subunit alpha</fullName>
        <shortName>NAC-alpha</shortName>
    </recommendedName>
    <alternativeName>
        <fullName>Alpha-NAC</fullName>
    </alternativeName>
</protein>
<organism>
    <name type="scientific">Chinchilla lanigera</name>
    <name type="common">Long-tailed chinchilla</name>
    <name type="synonym">Chinchilla villidera</name>
    <dbReference type="NCBI Taxonomy" id="34839"/>
    <lineage>
        <taxon>Eukaryota</taxon>
        <taxon>Metazoa</taxon>
        <taxon>Chordata</taxon>
        <taxon>Craniata</taxon>
        <taxon>Vertebrata</taxon>
        <taxon>Euteleostomi</taxon>
        <taxon>Mammalia</taxon>
        <taxon>Eutheria</taxon>
        <taxon>Euarchontoglires</taxon>
        <taxon>Glires</taxon>
        <taxon>Rodentia</taxon>
        <taxon>Hystricomorpha</taxon>
        <taxon>Chinchillidae</taxon>
        <taxon>Chinchilla</taxon>
    </lineage>
</organism>
<proteinExistence type="evidence at transcript level"/>
<dbReference type="EMBL" id="AY533209">
    <property type="protein sequence ID" value="AAS59412.1"/>
    <property type="molecule type" value="mRNA"/>
</dbReference>
<dbReference type="RefSeq" id="NP_001269301.1">
    <property type="nucleotide sequence ID" value="NM_001282372.1"/>
</dbReference>
<dbReference type="SMR" id="Q6QN10"/>
<dbReference type="GeneID" id="102014422"/>
<dbReference type="CTD" id="4666"/>
<dbReference type="OrthoDB" id="3169036at2759"/>
<dbReference type="Proteomes" id="UP000694398">
    <property type="component" value="Unplaced"/>
</dbReference>
<dbReference type="GO" id="GO:0005854">
    <property type="term" value="C:nascent polypeptide-associated complex"/>
    <property type="evidence" value="ECO:0007669"/>
    <property type="project" value="InterPro"/>
</dbReference>
<dbReference type="GO" id="GO:0005634">
    <property type="term" value="C:nucleus"/>
    <property type="evidence" value="ECO:0007669"/>
    <property type="project" value="UniProtKB-SubCell"/>
</dbReference>
<dbReference type="GO" id="GO:0003677">
    <property type="term" value="F:DNA binding"/>
    <property type="evidence" value="ECO:0007669"/>
    <property type="project" value="UniProtKB-KW"/>
</dbReference>
<dbReference type="GO" id="GO:0015031">
    <property type="term" value="P:protein transport"/>
    <property type="evidence" value="ECO:0007669"/>
    <property type="project" value="UniProtKB-KW"/>
</dbReference>
<dbReference type="CDD" id="cd22054">
    <property type="entry name" value="NAC_NACA"/>
    <property type="match status" value="1"/>
</dbReference>
<dbReference type="CDD" id="cd14415">
    <property type="entry name" value="UBA_NACA_NACP1"/>
    <property type="match status" value="1"/>
</dbReference>
<dbReference type="FunFam" id="2.20.70.30:FF:000002">
    <property type="entry name" value="Nascent polypeptide-associated complex (NAC), alpha subunit"/>
    <property type="match status" value="1"/>
</dbReference>
<dbReference type="FunFam" id="1.10.8.10:FF:000006">
    <property type="entry name" value="Putative nascent polypeptide-associated complex subunit alpha"/>
    <property type="match status" value="1"/>
</dbReference>
<dbReference type="Gene3D" id="1.10.8.10">
    <property type="entry name" value="DNA helicase RuvA subunit, C-terminal domain"/>
    <property type="match status" value="1"/>
</dbReference>
<dbReference type="Gene3D" id="2.20.70.30">
    <property type="entry name" value="Nascent polypeptide-associated complex domain"/>
    <property type="match status" value="1"/>
</dbReference>
<dbReference type="InterPro" id="IPR016641">
    <property type="entry name" value="EGD2/NACA0like"/>
</dbReference>
<dbReference type="InterPro" id="IPR044034">
    <property type="entry name" value="NAC-like_UBA"/>
</dbReference>
<dbReference type="InterPro" id="IPR038187">
    <property type="entry name" value="NAC_A/B_dom_sf"/>
</dbReference>
<dbReference type="InterPro" id="IPR002715">
    <property type="entry name" value="Nas_poly-pep-assoc_cplx_dom"/>
</dbReference>
<dbReference type="PANTHER" id="PTHR21713">
    <property type="entry name" value="NASCENT POLYPEPTIDE ASSOCIATED COMPLEX ALPHA SUBUNIT-RELATED"/>
    <property type="match status" value="1"/>
</dbReference>
<dbReference type="Pfam" id="PF01849">
    <property type="entry name" value="NAC"/>
    <property type="match status" value="1"/>
</dbReference>
<dbReference type="Pfam" id="PF19026">
    <property type="entry name" value="UBA_HYPK"/>
    <property type="match status" value="1"/>
</dbReference>
<dbReference type="PIRSF" id="PIRSF015901">
    <property type="entry name" value="NAC_alpha"/>
    <property type="match status" value="1"/>
</dbReference>
<dbReference type="SMART" id="SM01407">
    <property type="entry name" value="NAC"/>
    <property type="match status" value="1"/>
</dbReference>
<dbReference type="PROSITE" id="PS51151">
    <property type="entry name" value="NAC_AB"/>
    <property type="match status" value="1"/>
</dbReference>
<comment type="function">
    <text evidence="1">Prevents inappropriate targeting of non-secretory polypeptides to the endoplasmic reticulum (ER). Binds to nascent polypeptide chains as they emerge from the ribosome and blocks their interaction with the signal recognition particle (SRP), which normally targets nascent secretory peptides to the ER. Also reduces the inherent affinity of ribosomes for protein translocation sites in the ER membrane (M sites). May act as a specific coactivator for JUN, binding to DNA and stabilizing the interaction of JUN homodimers with target gene promoters (By similarity).</text>
</comment>
<comment type="subunit">
    <text evidence="1">Part of the nascent polypeptide-associated complex (NAC), which is a heterodimer of NACA and BTF3 (via NAC-A/B domains). NAC associates with ribosomes through the BTF3/NACB subunit and contacts the ribosomal protein L23, which is positioned near the exiting site. Both subunits can contact nascent polypeptide chains. NACA may also form homodimers, and only this form binds DNA. Interacts with TBP and JUN (By similarity).</text>
</comment>
<comment type="subcellular location">
    <subcellularLocation>
        <location evidence="1">Cytoplasm</location>
    </subcellularLocation>
    <subcellularLocation>
        <location evidence="1">Nucleus</location>
    </subcellularLocation>
    <text evidence="1">The heterodimer is located mainly in the cytosol, and the homodimer in the nucleus.</text>
</comment>
<comment type="domain">
    <text evidence="1">The positively charged inner surface of the NAC-A/B domain is crucial for NACA localization in the nucleus and DNA-binding. This region is blocked from binding nucleic acids in the heterodimeric complex by a helix region in the beta-subunit, it also displays much higher affinity for RNA than DNA (By similarity).</text>
</comment>
<comment type="PTM">
    <text>Phosphorylation of Ser-43 by ILK during cell adhesion may promote nuclear localization. Phosphorylation of Thr-159 by GSK3B may promote proteasome mediated degradation.</text>
</comment>
<comment type="similarity">
    <text evidence="6">Belongs to the NAC-alpha family.</text>
</comment>
<accession>Q6QN10</accession>
<feature type="chain" id="PRO_0000135575" description="Nascent polypeptide-associated complex subunit alpha">
    <location>
        <begin position="1"/>
        <end position="215"/>
    </location>
</feature>
<feature type="domain" description="NAC-A/B" evidence="4">
    <location>
        <begin position="70"/>
        <end position="135"/>
    </location>
</feature>
<feature type="domain" description="UBA">
    <location>
        <begin position="176"/>
        <end position="213"/>
    </location>
</feature>
<feature type="region of interest" description="Disordered" evidence="5">
    <location>
        <begin position="1"/>
        <end position="81"/>
    </location>
</feature>
<feature type="region of interest" description="Required for DNA-binding" evidence="1">
    <location>
        <begin position="69"/>
        <end position="80"/>
    </location>
</feature>
<feature type="region of interest" description="RNA/DNA-binding" evidence="1">
    <location>
        <begin position="93"/>
        <end position="108"/>
    </location>
</feature>
<feature type="compositionally biased region" description="Polar residues" evidence="5">
    <location>
        <begin position="9"/>
        <end position="28"/>
    </location>
</feature>
<feature type="compositionally biased region" description="Acidic residues" evidence="5">
    <location>
        <begin position="29"/>
        <end position="40"/>
    </location>
</feature>
<feature type="compositionally biased region" description="Low complexity" evidence="5">
    <location>
        <begin position="44"/>
        <end position="57"/>
    </location>
</feature>
<feature type="modified residue" description="Phosphoserine; by ILK1" evidence="2">
    <location>
        <position position="43"/>
    </location>
</feature>
<feature type="modified residue" description="Phosphoserine" evidence="2">
    <location>
        <position position="132"/>
    </location>
</feature>
<feature type="modified residue" description="N6-acetyllysine; alternate" evidence="2">
    <location>
        <position position="142"/>
    </location>
</feature>
<feature type="modified residue" description="Phosphothreonine; by GSK3-beta" evidence="3">
    <location>
        <position position="159"/>
    </location>
</feature>
<feature type="modified residue" description="Phosphothreonine" evidence="2">
    <location>
        <position position="161"/>
    </location>
</feature>
<feature type="modified residue" description="Phosphoserine" evidence="2">
    <location>
        <position position="166"/>
    </location>
</feature>
<feature type="modified residue" description="Phosphoserine" evidence="2">
    <location>
        <position position="186"/>
    </location>
</feature>
<feature type="modified residue" description="Phosphoserine" evidence="2">
    <location>
        <position position="191"/>
    </location>
</feature>
<feature type="modified residue" description="Phosphoserine" evidence="2">
    <location>
        <position position="203"/>
    </location>
</feature>
<feature type="cross-link" description="Glycyl lysine isopeptide (Lys-Gly) (interchain with G-Cter in SUMO2); alternate" evidence="2">
    <location>
        <position position="142"/>
    </location>
</feature>
<name>NACA_CHILA</name>
<sequence>MPGEATETVPATEQELPQPQAETGSGTESDSDESVPELEGQDSTQATTQQAQLAAAAEIDEEPVSKAKQSRSEKKARKAMSKLGLRQVTGVTRVTIRKSKNILFVITKPDVYKSPASDTYIVFGEAKIEDLSQQAQLAAAEKFKVQGEAVSNIQENTQTPTVQEESEEEEVDETGVEVKDIEWVMSQANVSRAKAVRALKNNSNNIVNAIMELTM</sequence>
<evidence type="ECO:0000250" key="1"/>
<evidence type="ECO:0000250" key="2">
    <source>
        <dbReference type="UniProtKB" id="Q13765"/>
    </source>
</evidence>
<evidence type="ECO:0000250" key="3">
    <source>
        <dbReference type="UniProtKB" id="Q60817"/>
    </source>
</evidence>
<evidence type="ECO:0000255" key="4">
    <source>
        <dbReference type="PROSITE-ProRule" id="PRU00507"/>
    </source>
</evidence>
<evidence type="ECO:0000256" key="5">
    <source>
        <dbReference type="SAM" id="MobiDB-lite"/>
    </source>
</evidence>
<evidence type="ECO:0000305" key="6"/>